<sequence length="153" mass="17319">MEIPSYASNIQPYGSQSGTKIASENDNAKSVSLSGDNSRSVSRTDKLSEHFSEQVRARQQESAETAMAQAKQRQRLNEEQLAKMVEQMNEFVKSINKGLSFRLDRESGREVVTIYEASTGDIIRQIPEEEMLEVLRRLAREQDHRSGLLMAKV</sequence>
<comment type="similarity">
    <text evidence="2">To FlaG in other Vibrio species.</text>
</comment>
<gene>
    <name type="primary">flaG</name>
    <name type="ordered locus">VC_2141</name>
</gene>
<dbReference type="EMBL" id="AE003852">
    <property type="protein sequence ID" value="AAF95286.1"/>
    <property type="molecule type" value="Genomic_DNA"/>
</dbReference>
<dbReference type="PIR" id="H82111">
    <property type="entry name" value="H82111"/>
</dbReference>
<dbReference type="RefSeq" id="NP_231772.1">
    <property type="nucleotide sequence ID" value="NC_002505.1"/>
</dbReference>
<dbReference type="RefSeq" id="WP_000405330.1">
    <property type="nucleotide sequence ID" value="NZ_LT906614.1"/>
</dbReference>
<dbReference type="SMR" id="P0C6D4"/>
<dbReference type="STRING" id="243277.VC_2141"/>
<dbReference type="DNASU" id="2613277"/>
<dbReference type="EnsemblBacteria" id="AAF95286">
    <property type="protein sequence ID" value="AAF95286"/>
    <property type="gene ID" value="VC_2141"/>
</dbReference>
<dbReference type="GeneID" id="69719239"/>
<dbReference type="KEGG" id="vch:VC_2141"/>
<dbReference type="PATRIC" id="fig|243277.26.peg.2046"/>
<dbReference type="eggNOG" id="COG1334">
    <property type="taxonomic scope" value="Bacteria"/>
</dbReference>
<dbReference type="HOGENOM" id="CLU_120910_4_1_6"/>
<dbReference type="Proteomes" id="UP000000584">
    <property type="component" value="Chromosome 1"/>
</dbReference>
<dbReference type="Gene3D" id="3.30.160.170">
    <property type="entry name" value="FlaG-like"/>
    <property type="match status" value="1"/>
</dbReference>
<dbReference type="InterPro" id="IPR005186">
    <property type="entry name" value="FlaG"/>
</dbReference>
<dbReference type="InterPro" id="IPR035924">
    <property type="entry name" value="FlaG-like_sf"/>
</dbReference>
<dbReference type="NCBIfam" id="NF006465">
    <property type="entry name" value="PRK08868.1"/>
    <property type="match status" value="1"/>
</dbReference>
<dbReference type="PANTHER" id="PTHR37166">
    <property type="entry name" value="PROTEIN FLAG"/>
    <property type="match status" value="1"/>
</dbReference>
<dbReference type="PANTHER" id="PTHR37166:SF1">
    <property type="entry name" value="PROTEIN FLAG"/>
    <property type="match status" value="1"/>
</dbReference>
<dbReference type="Pfam" id="PF03646">
    <property type="entry name" value="FlaG"/>
    <property type="match status" value="1"/>
</dbReference>
<dbReference type="SUPFAM" id="SSF160214">
    <property type="entry name" value="FlaG-like"/>
    <property type="match status" value="1"/>
</dbReference>
<reference key="1">
    <citation type="journal article" date="2000" name="Nature">
        <title>DNA sequence of both chromosomes of the cholera pathogen Vibrio cholerae.</title>
        <authorList>
            <person name="Heidelberg J.F."/>
            <person name="Eisen J.A."/>
            <person name="Nelson W.C."/>
            <person name="Clayton R.A."/>
            <person name="Gwinn M.L."/>
            <person name="Dodson R.J."/>
            <person name="Haft D.H."/>
            <person name="Hickey E.K."/>
            <person name="Peterson J.D."/>
            <person name="Umayam L.A."/>
            <person name="Gill S.R."/>
            <person name="Nelson K.E."/>
            <person name="Read T.D."/>
            <person name="Tettelin H."/>
            <person name="Richardson D.L."/>
            <person name="Ermolaeva M.D."/>
            <person name="Vamathevan J.J."/>
            <person name="Bass S."/>
            <person name="Qin H."/>
            <person name="Dragoi I."/>
            <person name="Sellers P."/>
            <person name="McDonald L.A."/>
            <person name="Utterback T.R."/>
            <person name="Fleischmann R.D."/>
            <person name="Nierman W.C."/>
            <person name="White O."/>
            <person name="Salzberg S.L."/>
            <person name="Smith H.O."/>
            <person name="Colwell R.R."/>
            <person name="Mekalanos J.J."/>
            <person name="Venter J.C."/>
            <person name="Fraser C.M."/>
        </authorList>
    </citation>
    <scope>NUCLEOTIDE SEQUENCE [LARGE SCALE GENOMIC DNA]</scope>
    <source>
        <strain>ATCC 39315 / El Tor Inaba N16961</strain>
    </source>
</reference>
<evidence type="ECO:0000256" key="1">
    <source>
        <dbReference type="SAM" id="MobiDB-lite"/>
    </source>
</evidence>
<evidence type="ECO:0000305" key="2"/>
<keyword id="KW-1185">Reference proteome</keyword>
<organism>
    <name type="scientific">Vibrio cholerae serotype O1 (strain ATCC 39315 / El Tor Inaba N16961)</name>
    <dbReference type="NCBI Taxonomy" id="243277"/>
    <lineage>
        <taxon>Bacteria</taxon>
        <taxon>Pseudomonadati</taxon>
        <taxon>Pseudomonadota</taxon>
        <taxon>Gammaproteobacteria</taxon>
        <taxon>Vibrionales</taxon>
        <taxon>Vibrionaceae</taxon>
        <taxon>Vibrio</taxon>
    </lineage>
</organism>
<accession>P0C6D4</accession>
<accession>O34224</accession>
<accession>Q9KQ62</accession>
<feature type="chain" id="PRO_0000087276" description="Protein FlaG">
    <location>
        <begin position="1"/>
        <end position="153"/>
    </location>
</feature>
<feature type="region of interest" description="Disordered" evidence="1">
    <location>
        <begin position="1"/>
        <end position="74"/>
    </location>
</feature>
<feature type="compositionally biased region" description="Polar residues" evidence="1">
    <location>
        <begin position="1"/>
        <end position="41"/>
    </location>
</feature>
<feature type="compositionally biased region" description="Basic and acidic residues" evidence="1">
    <location>
        <begin position="42"/>
        <end position="61"/>
    </location>
</feature>
<proteinExistence type="predicted"/>
<protein>
    <recommendedName>
        <fullName>Protein FlaG</fullName>
    </recommendedName>
</protein>
<name>FLAG_VIBCH</name>